<comment type="function">
    <text evidence="1">Catalyzes a reversible aldol reaction between acetaldehyde and D-glyceraldehyde 3-phosphate to generate 2-deoxy-D-ribose 5-phosphate.</text>
</comment>
<comment type="catalytic activity">
    <reaction evidence="1">
        <text>2-deoxy-D-ribose 5-phosphate = D-glyceraldehyde 3-phosphate + acetaldehyde</text>
        <dbReference type="Rhea" id="RHEA:12821"/>
        <dbReference type="ChEBI" id="CHEBI:15343"/>
        <dbReference type="ChEBI" id="CHEBI:59776"/>
        <dbReference type="ChEBI" id="CHEBI:62877"/>
        <dbReference type="EC" id="4.1.2.4"/>
    </reaction>
</comment>
<comment type="pathway">
    <text evidence="1">Carbohydrate degradation; 2-deoxy-D-ribose 1-phosphate degradation; D-glyceraldehyde 3-phosphate and acetaldehyde from 2-deoxy-alpha-D-ribose 1-phosphate: step 2/2.</text>
</comment>
<comment type="subcellular location">
    <subcellularLocation>
        <location evidence="1">Cytoplasm</location>
    </subcellularLocation>
</comment>
<comment type="similarity">
    <text evidence="1">Belongs to the DeoC/FbaB aldolase family. DeoC type 1 subfamily.</text>
</comment>
<evidence type="ECO:0000255" key="1">
    <source>
        <dbReference type="HAMAP-Rule" id="MF_00114"/>
    </source>
</evidence>
<sequence>MATDIARLIDHTLLKADATKEQILQLCKEAQTYQFASVCINPYWVKLAAEQLKEDKHVAVCTVIGFPLGQSTPETKAFETKNAIANGATEVDMVINIAALKDKQDQMVLNDIRAVVDAAKDKALTKVILETCLLTNEEKERACALAVQAGADYVKTSTGFSTGGATVEDIALMRRVVGADVGVKASGGIRDLAAVNAMVEAGATRIGASAGVAIVTGATGSSGY</sequence>
<name>DEOC_SHOC1</name>
<protein>
    <recommendedName>
        <fullName evidence="1">Deoxyribose-phosphate aldolase</fullName>
        <shortName evidence="1">DERA</shortName>
        <ecNumber evidence="1">4.1.2.4</ecNumber>
    </recommendedName>
    <alternativeName>
        <fullName evidence="1">2-deoxy-D-ribose 5-phosphate aldolase</fullName>
    </alternativeName>
    <alternativeName>
        <fullName evidence="1">Phosphodeoxyriboaldolase</fullName>
        <shortName evidence="1">Deoxyriboaldolase</shortName>
    </alternativeName>
</protein>
<dbReference type="EC" id="4.1.2.4" evidence="1"/>
<dbReference type="EMBL" id="AP006627">
    <property type="protein sequence ID" value="BAD64201.1"/>
    <property type="molecule type" value="Genomic_DNA"/>
</dbReference>
<dbReference type="RefSeq" id="WP_011246510.1">
    <property type="nucleotide sequence ID" value="NC_006582.1"/>
</dbReference>
<dbReference type="SMR" id="Q5WHF4"/>
<dbReference type="STRING" id="66692.ABC1666"/>
<dbReference type="KEGG" id="bcl:ABC1666"/>
<dbReference type="eggNOG" id="COG0274">
    <property type="taxonomic scope" value="Bacteria"/>
</dbReference>
<dbReference type="HOGENOM" id="CLU_053595_0_2_9"/>
<dbReference type="OrthoDB" id="9778711at2"/>
<dbReference type="UniPathway" id="UPA00002">
    <property type="reaction ID" value="UER00468"/>
</dbReference>
<dbReference type="Proteomes" id="UP000001168">
    <property type="component" value="Chromosome"/>
</dbReference>
<dbReference type="GO" id="GO:0005737">
    <property type="term" value="C:cytoplasm"/>
    <property type="evidence" value="ECO:0007669"/>
    <property type="project" value="UniProtKB-SubCell"/>
</dbReference>
<dbReference type="GO" id="GO:0004139">
    <property type="term" value="F:deoxyribose-phosphate aldolase activity"/>
    <property type="evidence" value="ECO:0007669"/>
    <property type="project" value="UniProtKB-UniRule"/>
</dbReference>
<dbReference type="GO" id="GO:0006018">
    <property type="term" value="P:2-deoxyribose 1-phosphate catabolic process"/>
    <property type="evidence" value="ECO:0007669"/>
    <property type="project" value="UniProtKB-UniRule"/>
</dbReference>
<dbReference type="GO" id="GO:0016052">
    <property type="term" value="P:carbohydrate catabolic process"/>
    <property type="evidence" value="ECO:0007669"/>
    <property type="project" value="TreeGrafter"/>
</dbReference>
<dbReference type="GO" id="GO:0009264">
    <property type="term" value="P:deoxyribonucleotide catabolic process"/>
    <property type="evidence" value="ECO:0007669"/>
    <property type="project" value="InterPro"/>
</dbReference>
<dbReference type="CDD" id="cd00959">
    <property type="entry name" value="DeoC"/>
    <property type="match status" value="1"/>
</dbReference>
<dbReference type="FunFam" id="3.20.20.70:FF:000044">
    <property type="entry name" value="Deoxyribose-phosphate aldolase"/>
    <property type="match status" value="1"/>
</dbReference>
<dbReference type="Gene3D" id="3.20.20.70">
    <property type="entry name" value="Aldolase class I"/>
    <property type="match status" value="1"/>
</dbReference>
<dbReference type="HAMAP" id="MF_00114">
    <property type="entry name" value="DeoC_type1"/>
    <property type="match status" value="1"/>
</dbReference>
<dbReference type="InterPro" id="IPR013785">
    <property type="entry name" value="Aldolase_TIM"/>
</dbReference>
<dbReference type="InterPro" id="IPR011343">
    <property type="entry name" value="DeoC"/>
</dbReference>
<dbReference type="InterPro" id="IPR002915">
    <property type="entry name" value="DeoC/FbaB/LacD_aldolase"/>
</dbReference>
<dbReference type="InterPro" id="IPR028581">
    <property type="entry name" value="DeoC_typeI"/>
</dbReference>
<dbReference type="NCBIfam" id="TIGR00126">
    <property type="entry name" value="deoC"/>
    <property type="match status" value="1"/>
</dbReference>
<dbReference type="PANTHER" id="PTHR10889">
    <property type="entry name" value="DEOXYRIBOSE-PHOSPHATE ALDOLASE"/>
    <property type="match status" value="1"/>
</dbReference>
<dbReference type="PANTHER" id="PTHR10889:SF1">
    <property type="entry name" value="DEOXYRIBOSE-PHOSPHATE ALDOLASE"/>
    <property type="match status" value="1"/>
</dbReference>
<dbReference type="Pfam" id="PF01791">
    <property type="entry name" value="DeoC"/>
    <property type="match status" value="1"/>
</dbReference>
<dbReference type="PIRSF" id="PIRSF001357">
    <property type="entry name" value="DeoC"/>
    <property type="match status" value="1"/>
</dbReference>
<dbReference type="SMART" id="SM01133">
    <property type="entry name" value="DeoC"/>
    <property type="match status" value="1"/>
</dbReference>
<dbReference type="SUPFAM" id="SSF51569">
    <property type="entry name" value="Aldolase"/>
    <property type="match status" value="1"/>
</dbReference>
<gene>
    <name evidence="1" type="primary">deoC</name>
    <name type="synonym">dra</name>
    <name type="ordered locus">ABC1666</name>
</gene>
<organism>
    <name type="scientific">Shouchella clausii (strain KSM-K16)</name>
    <name type="common">Alkalihalobacillus clausii</name>
    <dbReference type="NCBI Taxonomy" id="66692"/>
    <lineage>
        <taxon>Bacteria</taxon>
        <taxon>Bacillati</taxon>
        <taxon>Bacillota</taxon>
        <taxon>Bacilli</taxon>
        <taxon>Bacillales</taxon>
        <taxon>Bacillaceae</taxon>
        <taxon>Shouchella</taxon>
    </lineage>
</organism>
<feature type="chain" id="PRO_0000231530" description="Deoxyribose-phosphate aldolase">
    <location>
        <begin position="1"/>
        <end position="224"/>
    </location>
</feature>
<feature type="active site" description="Proton donor/acceptor" evidence="1">
    <location>
        <position position="92"/>
    </location>
</feature>
<feature type="active site" description="Schiff-base intermediate with acetaldehyde" evidence="1">
    <location>
        <position position="155"/>
    </location>
</feature>
<feature type="active site" description="Proton donor/acceptor" evidence="1">
    <location>
        <position position="184"/>
    </location>
</feature>
<reference key="1">
    <citation type="submission" date="2003-10" db="EMBL/GenBank/DDBJ databases">
        <title>The complete genome sequence of the alkaliphilic Bacillus clausii KSM-K16.</title>
        <authorList>
            <person name="Takaki Y."/>
            <person name="Kageyama Y."/>
            <person name="Shimamura S."/>
            <person name="Suzuki H."/>
            <person name="Nishi S."/>
            <person name="Hatada Y."/>
            <person name="Kawai S."/>
            <person name="Ito S."/>
            <person name="Horikoshi K."/>
        </authorList>
    </citation>
    <scope>NUCLEOTIDE SEQUENCE [LARGE SCALE GENOMIC DNA]</scope>
    <source>
        <strain>KSM-K16</strain>
    </source>
</reference>
<proteinExistence type="inferred from homology"/>
<keyword id="KW-0963">Cytoplasm</keyword>
<keyword id="KW-0456">Lyase</keyword>
<keyword id="KW-1185">Reference proteome</keyword>
<keyword id="KW-0704">Schiff base</keyword>
<accession>Q5WHF4</accession>